<proteinExistence type="inferred from homology"/>
<organism>
    <name type="scientific">Burkholderia ambifaria (strain MC40-6)</name>
    <dbReference type="NCBI Taxonomy" id="398577"/>
    <lineage>
        <taxon>Bacteria</taxon>
        <taxon>Pseudomonadati</taxon>
        <taxon>Pseudomonadota</taxon>
        <taxon>Betaproteobacteria</taxon>
        <taxon>Burkholderiales</taxon>
        <taxon>Burkholderiaceae</taxon>
        <taxon>Burkholderia</taxon>
        <taxon>Burkholderia cepacia complex</taxon>
    </lineage>
</organism>
<keyword id="KW-0119">Carbohydrate metabolism</keyword>
<keyword id="KW-0963">Cytoplasm</keyword>
<keyword id="KW-0413">Isomerase</keyword>
<keyword id="KW-0684">Rhamnose metabolism</keyword>
<feature type="chain" id="PRO_0000344556" description="L-rhamnose mutarotase">
    <location>
        <begin position="1"/>
        <end position="104"/>
    </location>
</feature>
<feature type="active site" description="Proton donor" evidence="1">
    <location>
        <position position="22"/>
    </location>
</feature>
<feature type="binding site" evidence="1">
    <location>
        <position position="18"/>
    </location>
    <ligand>
        <name>substrate</name>
    </ligand>
</feature>
<feature type="binding site" evidence="1">
    <location>
        <position position="41"/>
    </location>
    <ligand>
        <name>substrate</name>
    </ligand>
</feature>
<feature type="binding site" evidence="1">
    <location>
        <begin position="76"/>
        <end position="77"/>
    </location>
    <ligand>
        <name>substrate</name>
    </ligand>
</feature>
<protein>
    <recommendedName>
        <fullName evidence="1">L-rhamnose mutarotase</fullName>
        <ecNumber evidence="1">5.1.3.32</ecNumber>
    </recommendedName>
    <alternativeName>
        <fullName evidence="1">Rhamnose 1-epimerase</fullName>
    </alternativeName>
    <alternativeName>
        <fullName evidence="1">Type-3 mutarotase</fullName>
    </alternativeName>
</protein>
<name>RHAM_BURA4</name>
<dbReference type="EC" id="5.1.3.32" evidence="1"/>
<dbReference type="EMBL" id="CP001025">
    <property type="protein sequence ID" value="ACB63701.1"/>
    <property type="molecule type" value="Genomic_DNA"/>
</dbReference>
<dbReference type="RefSeq" id="WP_012363570.1">
    <property type="nucleotide sequence ID" value="NC_010551.1"/>
</dbReference>
<dbReference type="SMR" id="B1YMY7"/>
<dbReference type="KEGG" id="bac:BamMC406_1210"/>
<dbReference type="HOGENOM" id="CLU_100689_2_0_4"/>
<dbReference type="OrthoDB" id="9799608at2"/>
<dbReference type="UniPathway" id="UPA00125"/>
<dbReference type="Proteomes" id="UP000001680">
    <property type="component" value="Chromosome 1"/>
</dbReference>
<dbReference type="GO" id="GO:0005737">
    <property type="term" value="C:cytoplasm"/>
    <property type="evidence" value="ECO:0007669"/>
    <property type="project" value="UniProtKB-SubCell"/>
</dbReference>
<dbReference type="GO" id="GO:0062192">
    <property type="term" value="F:L-rhamnose mutarotase activity"/>
    <property type="evidence" value="ECO:0007669"/>
    <property type="project" value="UniProtKB-EC"/>
</dbReference>
<dbReference type="GO" id="GO:0019301">
    <property type="term" value="P:rhamnose catabolic process"/>
    <property type="evidence" value="ECO:0007669"/>
    <property type="project" value="TreeGrafter"/>
</dbReference>
<dbReference type="Gene3D" id="3.30.70.100">
    <property type="match status" value="1"/>
</dbReference>
<dbReference type="HAMAP" id="MF_01663">
    <property type="entry name" value="L_rham_rotase"/>
    <property type="match status" value="1"/>
</dbReference>
<dbReference type="InterPro" id="IPR011008">
    <property type="entry name" value="Dimeric_a/b-barrel"/>
</dbReference>
<dbReference type="InterPro" id="IPR013448">
    <property type="entry name" value="L-rhamnose_mutarotase"/>
</dbReference>
<dbReference type="InterPro" id="IPR008000">
    <property type="entry name" value="Rham/fucose_mutarotase"/>
</dbReference>
<dbReference type="NCBIfam" id="TIGR02625">
    <property type="entry name" value="YiiL_rotase"/>
    <property type="match status" value="1"/>
</dbReference>
<dbReference type="PANTHER" id="PTHR34389">
    <property type="entry name" value="L-RHAMNOSE MUTAROTASE"/>
    <property type="match status" value="1"/>
</dbReference>
<dbReference type="PANTHER" id="PTHR34389:SF2">
    <property type="entry name" value="L-RHAMNOSE MUTAROTASE"/>
    <property type="match status" value="1"/>
</dbReference>
<dbReference type="Pfam" id="PF05336">
    <property type="entry name" value="rhaM"/>
    <property type="match status" value="1"/>
</dbReference>
<dbReference type="SUPFAM" id="SSF54909">
    <property type="entry name" value="Dimeric alpha+beta barrel"/>
    <property type="match status" value="1"/>
</dbReference>
<accession>B1YMY7</accession>
<evidence type="ECO:0000255" key="1">
    <source>
        <dbReference type="HAMAP-Rule" id="MF_01663"/>
    </source>
</evidence>
<reference key="1">
    <citation type="submission" date="2008-04" db="EMBL/GenBank/DDBJ databases">
        <title>Complete sequence of chromosome 1 of Burkholderia ambifaria MC40-6.</title>
        <authorList>
            <person name="Copeland A."/>
            <person name="Lucas S."/>
            <person name="Lapidus A."/>
            <person name="Glavina del Rio T."/>
            <person name="Dalin E."/>
            <person name="Tice H."/>
            <person name="Pitluck S."/>
            <person name="Chain P."/>
            <person name="Malfatti S."/>
            <person name="Shin M."/>
            <person name="Vergez L."/>
            <person name="Lang D."/>
            <person name="Schmutz J."/>
            <person name="Larimer F."/>
            <person name="Land M."/>
            <person name="Hauser L."/>
            <person name="Kyrpides N."/>
            <person name="Lykidis A."/>
            <person name="Ramette A."/>
            <person name="Konstantinidis K."/>
            <person name="Tiedje J."/>
            <person name="Richardson P."/>
        </authorList>
    </citation>
    <scope>NUCLEOTIDE SEQUENCE [LARGE SCALE GENOMIC DNA]</scope>
    <source>
        <strain>MC40-6</strain>
    </source>
</reference>
<sequence>METIAFRMVLNPGQSEEYRRRHREIWPELVETLREAGIRDYWIFLDDATNHLFAVLKRERDHRMDQLVTDDVMRKWWGFMSDIMATGSDGAPAQKPLVPMFYLP</sequence>
<comment type="function">
    <text evidence="1">Involved in the anomeric conversion of L-rhamnose.</text>
</comment>
<comment type="catalytic activity">
    <reaction evidence="1">
        <text>alpha-L-rhamnose = beta-L-rhamnose</text>
        <dbReference type="Rhea" id="RHEA:25584"/>
        <dbReference type="ChEBI" id="CHEBI:27586"/>
        <dbReference type="ChEBI" id="CHEBI:27907"/>
        <dbReference type="EC" id="5.1.3.32"/>
    </reaction>
</comment>
<comment type="pathway">
    <text evidence="1">Carbohydrate metabolism; L-rhamnose metabolism.</text>
</comment>
<comment type="subunit">
    <text evidence="1">Homodimer.</text>
</comment>
<comment type="subcellular location">
    <subcellularLocation>
        <location evidence="1">Cytoplasm</location>
    </subcellularLocation>
</comment>
<comment type="similarity">
    <text evidence="1">Belongs to the rhamnose mutarotase family.</text>
</comment>
<gene>
    <name evidence="1" type="primary">rhaM</name>
    <name type="ordered locus">BamMC406_1210</name>
</gene>